<proteinExistence type="inferred from homology"/>
<sequence>MLPLTKIWLCYGIFSAILMIFMIVLLSVSKHFTNSFYRVITMDIILNLLCWVNTWPSRMVFREDGFGFARFLYEFYNKSFDVSFFLSNVFFHVQSASTICICCHRLSTAIFDNSNRFWSRFYLLVYALIILYSFLAVQLLYRAPIKFDYELNKFYSEPATLDQRLSVAMYLRCFMSGYLLAIIIIALSTLYQVRKRIAPFDHLHKNLLRKMSLIAFSHTFVFTMLLAWQTLNSFVVYASFIELLMIVSDMISFSMAYILLIFDGNVRSVIKNNLPVIQINGRRISDAQRSQNNIT</sequence>
<feature type="chain" id="PRO_0000104573" description="Serpentine receptor class gamma-53">
    <location>
        <begin position="1"/>
        <end position="295"/>
    </location>
</feature>
<feature type="transmembrane region" description="Helical" evidence="1">
    <location>
        <begin position="7"/>
        <end position="27"/>
    </location>
</feature>
<feature type="transmembrane region" description="Helical" evidence="1">
    <location>
        <begin position="39"/>
        <end position="61"/>
    </location>
</feature>
<feature type="transmembrane region" description="Helical" evidence="1">
    <location>
        <begin position="121"/>
        <end position="141"/>
    </location>
</feature>
<feature type="transmembrane region" description="Helical" evidence="1">
    <location>
        <begin position="173"/>
        <end position="193"/>
    </location>
</feature>
<feature type="transmembrane region" description="Helical" evidence="1">
    <location>
        <begin position="211"/>
        <end position="230"/>
    </location>
</feature>
<feature type="transmembrane region" description="Helical" evidence="1">
    <location>
        <begin position="241"/>
        <end position="261"/>
    </location>
</feature>
<keyword id="KW-0472">Membrane</keyword>
<keyword id="KW-1185">Reference proteome</keyword>
<keyword id="KW-0812">Transmembrane</keyword>
<keyword id="KW-1133">Transmembrane helix</keyword>
<accession>O16974</accession>
<name>SRG53_CAEEL</name>
<gene>
    <name type="primary">srg-53</name>
    <name type="ORF">T02B11.1</name>
</gene>
<dbReference type="EMBL" id="FO081565">
    <property type="protein sequence ID" value="CCD72446.1"/>
    <property type="molecule type" value="Genomic_DNA"/>
</dbReference>
<dbReference type="PIR" id="T32202">
    <property type="entry name" value="T32202"/>
</dbReference>
<dbReference type="RefSeq" id="NP_503348.1">
    <property type="nucleotide sequence ID" value="NM_070947.3"/>
</dbReference>
<dbReference type="SMR" id="O16974"/>
<dbReference type="FunCoup" id="O16974">
    <property type="interactions" value="15"/>
</dbReference>
<dbReference type="PaxDb" id="6239-T02B11.1"/>
<dbReference type="EnsemblMetazoa" id="T02B11.1.1">
    <property type="protein sequence ID" value="T02B11.1.1"/>
    <property type="gene ID" value="WBGene00005210"/>
</dbReference>
<dbReference type="GeneID" id="187980"/>
<dbReference type="KEGG" id="cel:CELE_T02B11.1"/>
<dbReference type="UCSC" id="T02B11.1">
    <property type="organism name" value="c. elegans"/>
</dbReference>
<dbReference type="AGR" id="WB:WBGene00005210"/>
<dbReference type="CTD" id="187980"/>
<dbReference type="WormBase" id="T02B11.1">
    <property type="protein sequence ID" value="CE13032"/>
    <property type="gene ID" value="WBGene00005210"/>
    <property type="gene designation" value="srg-53"/>
</dbReference>
<dbReference type="eggNOG" id="ENOG502TGR7">
    <property type="taxonomic scope" value="Eukaryota"/>
</dbReference>
<dbReference type="GeneTree" id="ENSGT00970000195850"/>
<dbReference type="HOGENOM" id="CLU_076972_1_0_1"/>
<dbReference type="InParanoid" id="O16974"/>
<dbReference type="OrthoDB" id="5864551at2759"/>
<dbReference type="PhylomeDB" id="O16974"/>
<dbReference type="PRO" id="PR:O16974"/>
<dbReference type="Proteomes" id="UP000001940">
    <property type="component" value="Chromosome V"/>
</dbReference>
<dbReference type="GO" id="GO:0016020">
    <property type="term" value="C:membrane"/>
    <property type="evidence" value="ECO:0007669"/>
    <property type="project" value="UniProtKB-SubCell"/>
</dbReference>
<dbReference type="GO" id="GO:0004888">
    <property type="term" value="F:transmembrane signaling receptor activity"/>
    <property type="evidence" value="ECO:0007669"/>
    <property type="project" value="InterPro"/>
</dbReference>
<dbReference type="GO" id="GO:0007606">
    <property type="term" value="P:sensory perception of chemical stimulus"/>
    <property type="evidence" value="ECO:0007669"/>
    <property type="project" value="InterPro"/>
</dbReference>
<dbReference type="InterPro" id="IPR000609">
    <property type="entry name" value="7TM_GPCR_serpentine_rcpt_Srg"/>
</dbReference>
<dbReference type="InterPro" id="IPR052880">
    <property type="entry name" value="NRL-Serpentine_Class_Gamma"/>
</dbReference>
<dbReference type="PANTHER" id="PTHR31114">
    <property type="entry name" value="SERPENTINE RECEPTOR CLASS GAMMA"/>
    <property type="match status" value="1"/>
</dbReference>
<dbReference type="PANTHER" id="PTHR31114:SF4">
    <property type="entry name" value="SERPENTINE RECEPTOR CLASS GAMMA-RELATED"/>
    <property type="match status" value="1"/>
</dbReference>
<dbReference type="Pfam" id="PF02118">
    <property type="entry name" value="Srg"/>
    <property type="match status" value="1"/>
</dbReference>
<organism>
    <name type="scientific">Caenorhabditis elegans</name>
    <dbReference type="NCBI Taxonomy" id="6239"/>
    <lineage>
        <taxon>Eukaryota</taxon>
        <taxon>Metazoa</taxon>
        <taxon>Ecdysozoa</taxon>
        <taxon>Nematoda</taxon>
        <taxon>Chromadorea</taxon>
        <taxon>Rhabditida</taxon>
        <taxon>Rhabditina</taxon>
        <taxon>Rhabditomorpha</taxon>
        <taxon>Rhabditoidea</taxon>
        <taxon>Rhabditidae</taxon>
        <taxon>Peloderinae</taxon>
        <taxon>Caenorhabditis</taxon>
    </lineage>
</organism>
<comment type="subcellular location">
    <subcellularLocation>
        <location evidence="2">Membrane</location>
        <topology evidence="2">Multi-pass membrane protein</topology>
    </subcellularLocation>
</comment>
<comment type="similarity">
    <text evidence="2">Belongs to the nematode receptor-like protein srg family.</text>
</comment>
<reference key="1">
    <citation type="journal article" date="1998" name="Science">
        <title>Genome sequence of the nematode C. elegans: a platform for investigating biology.</title>
        <authorList>
            <consortium name="The C. elegans sequencing consortium"/>
        </authorList>
    </citation>
    <scope>NUCLEOTIDE SEQUENCE [LARGE SCALE GENOMIC DNA]</scope>
    <source>
        <strain>Bristol N2</strain>
    </source>
</reference>
<protein>
    <recommendedName>
        <fullName>Serpentine receptor class gamma-53</fullName>
        <shortName>Protein srg-53</shortName>
    </recommendedName>
</protein>
<evidence type="ECO:0000255" key="1"/>
<evidence type="ECO:0000305" key="2"/>